<sequence length="123" mass="13935">MIKGKSRTEVKALAQYICMSAHKARRVIDQIRGRSYEQTLMILELMPYRASYHIFKLVYSAAANASHNKGLNEADSFISKAEVNGGVIVKKCKPRARGRSYPIKRPTCHITIVLNKRSNLTKK</sequence>
<gene>
    <name type="primary">rpl22</name>
</gene>
<organism>
    <name type="scientific">Illicium oligandrum</name>
    <name type="common">Star anise</name>
    <dbReference type="NCBI Taxonomy" id="145286"/>
    <lineage>
        <taxon>Eukaryota</taxon>
        <taxon>Viridiplantae</taxon>
        <taxon>Streptophyta</taxon>
        <taxon>Embryophyta</taxon>
        <taxon>Tracheophyta</taxon>
        <taxon>Spermatophyta</taxon>
        <taxon>Magnoliopsida</taxon>
        <taxon>Austrobaileyales</taxon>
        <taxon>Schisandraceae</taxon>
        <taxon>Illicium</taxon>
    </lineage>
</organism>
<accession>A6MMY4</accession>
<protein>
    <recommendedName>
        <fullName evidence="2">Large ribosomal subunit protein uL22c</fullName>
    </recommendedName>
    <alternativeName>
        <fullName>50S ribosomal protein L22, chloroplastic</fullName>
    </alternativeName>
</protein>
<evidence type="ECO:0000250" key="1"/>
<evidence type="ECO:0000305" key="2"/>
<name>RK22_ILLOL</name>
<reference key="1">
    <citation type="journal article" date="2007" name="Mol. Phylogenet. Evol.">
        <title>Phylogenetic and evolutionary implications of complete chloroplast genome sequences of four early-diverging angiosperms: Buxus (Buxaceae), Chloranthus (Chloranthaceae), Dioscorea (Dioscoreaceae), and Illicium (Schisandraceae).</title>
        <authorList>
            <person name="Hansen D.R."/>
            <person name="Dastidar S.G."/>
            <person name="Cai Z."/>
            <person name="Penaflor C."/>
            <person name="Kuehl J.V."/>
            <person name="Boore J.L."/>
            <person name="Jansen R.K."/>
        </authorList>
    </citation>
    <scope>NUCLEOTIDE SEQUENCE [LARGE SCALE GENOMIC DNA]</scope>
</reference>
<dbReference type="EMBL" id="EF380354">
    <property type="protein sequence ID" value="ABQ52558.1"/>
    <property type="molecule type" value="Genomic_DNA"/>
</dbReference>
<dbReference type="RefSeq" id="YP_001294310.1">
    <property type="nucleotide sequence ID" value="NC_009600.1"/>
</dbReference>
<dbReference type="SMR" id="A6MMY4"/>
<dbReference type="GeneID" id="5236749"/>
<dbReference type="GO" id="GO:0009507">
    <property type="term" value="C:chloroplast"/>
    <property type="evidence" value="ECO:0007669"/>
    <property type="project" value="UniProtKB-SubCell"/>
</dbReference>
<dbReference type="GO" id="GO:0015934">
    <property type="term" value="C:large ribosomal subunit"/>
    <property type="evidence" value="ECO:0007669"/>
    <property type="project" value="InterPro"/>
</dbReference>
<dbReference type="GO" id="GO:0019843">
    <property type="term" value="F:rRNA binding"/>
    <property type="evidence" value="ECO:0007669"/>
    <property type="project" value="UniProtKB-UniRule"/>
</dbReference>
<dbReference type="GO" id="GO:0003735">
    <property type="term" value="F:structural constituent of ribosome"/>
    <property type="evidence" value="ECO:0007669"/>
    <property type="project" value="InterPro"/>
</dbReference>
<dbReference type="GO" id="GO:0006412">
    <property type="term" value="P:translation"/>
    <property type="evidence" value="ECO:0007669"/>
    <property type="project" value="UniProtKB-UniRule"/>
</dbReference>
<dbReference type="CDD" id="cd00336">
    <property type="entry name" value="Ribosomal_L22"/>
    <property type="match status" value="1"/>
</dbReference>
<dbReference type="FunFam" id="3.90.470.10:FF:000006">
    <property type="entry name" value="50S ribosomal protein L22, chloroplastic"/>
    <property type="match status" value="1"/>
</dbReference>
<dbReference type="Gene3D" id="3.90.470.10">
    <property type="entry name" value="Ribosomal protein L22/L17"/>
    <property type="match status" value="1"/>
</dbReference>
<dbReference type="HAMAP" id="MF_01331_B">
    <property type="entry name" value="Ribosomal_uL22_B"/>
    <property type="match status" value="1"/>
</dbReference>
<dbReference type="InterPro" id="IPR001063">
    <property type="entry name" value="Ribosomal_uL22"/>
</dbReference>
<dbReference type="InterPro" id="IPR005727">
    <property type="entry name" value="Ribosomal_uL22_bac/chlpt-type"/>
</dbReference>
<dbReference type="InterPro" id="IPR047867">
    <property type="entry name" value="Ribosomal_uL22_bac/org-type"/>
</dbReference>
<dbReference type="InterPro" id="IPR018260">
    <property type="entry name" value="Ribosomal_uL22_CS"/>
</dbReference>
<dbReference type="InterPro" id="IPR036394">
    <property type="entry name" value="Ribosomal_uL22_sf"/>
</dbReference>
<dbReference type="NCBIfam" id="TIGR01044">
    <property type="entry name" value="rplV_bact"/>
    <property type="match status" value="1"/>
</dbReference>
<dbReference type="PANTHER" id="PTHR13501">
    <property type="entry name" value="CHLOROPLAST 50S RIBOSOMAL PROTEIN L22-RELATED"/>
    <property type="match status" value="1"/>
</dbReference>
<dbReference type="PANTHER" id="PTHR13501:SF10">
    <property type="entry name" value="LARGE RIBOSOMAL SUBUNIT PROTEIN UL22M"/>
    <property type="match status" value="1"/>
</dbReference>
<dbReference type="Pfam" id="PF00237">
    <property type="entry name" value="Ribosomal_L22"/>
    <property type="match status" value="1"/>
</dbReference>
<dbReference type="SUPFAM" id="SSF54843">
    <property type="entry name" value="Ribosomal protein L22"/>
    <property type="match status" value="1"/>
</dbReference>
<dbReference type="PROSITE" id="PS00464">
    <property type="entry name" value="RIBOSOMAL_L22"/>
    <property type="match status" value="1"/>
</dbReference>
<keyword id="KW-0150">Chloroplast</keyword>
<keyword id="KW-0934">Plastid</keyword>
<keyword id="KW-0687">Ribonucleoprotein</keyword>
<keyword id="KW-0689">Ribosomal protein</keyword>
<keyword id="KW-0694">RNA-binding</keyword>
<keyword id="KW-0699">rRNA-binding</keyword>
<comment type="function">
    <text evidence="1">This protein binds specifically to 23S rRNA.</text>
</comment>
<comment type="function">
    <text evidence="1">The globular domain of the protein is located near the polypeptide exit tunnel on the outside of the subunit, while an extended beta-hairpin is found that lines the wall of the exit tunnel in the center of the 70S ribosome.</text>
</comment>
<comment type="subunit">
    <text evidence="1">Part of the 50S ribosomal subunit.</text>
</comment>
<comment type="subcellular location">
    <subcellularLocation>
        <location>Plastid</location>
        <location>Chloroplast</location>
    </subcellularLocation>
</comment>
<comment type="similarity">
    <text evidence="2">Belongs to the universal ribosomal protein uL22 family.</text>
</comment>
<feature type="chain" id="PRO_0000354576" description="Large ribosomal subunit protein uL22c">
    <location>
        <begin position="1"/>
        <end position="123"/>
    </location>
</feature>
<proteinExistence type="inferred from homology"/>
<geneLocation type="chloroplast"/>